<accession>A2IB53</accession>
<reference key="1">
    <citation type="submission" date="2006-12" db="EMBL/GenBank/DDBJ databases">
        <title>Isolating a citrus MADs-box gene related with fruit ripening and floral development.</title>
        <authorList>
            <person name="Liu Y.Z."/>
            <person name="Ye J.L."/>
            <person name="Zhang J.C."/>
            <person name="Li D.L."/>
            <person name="Deng X.X."/>
        </authorList>
    </citation>
    <scope>NUCLEOTIDE SEQUENCE [MRNA]</scope>
</reference>
<sequence length="256" mass="30425">MGRGRVQLKRIENKINRQVTFSKRRAGLLKKAHEISVLCDAEVALVVFSHKGKLFEYSTDSCMEKILERYERYSYAERQLIAPESDVNTNWSMEYNRLKAKIELLERNQRHYLGEDLQAMSPKELQNLEQQLDTALKHIRTRKNQLMYESINELQKKEKAIQEQNSMLFKQIKEREKIFRAQQEQWDQQNQGPNMPPPLPPQQHQIQHPYMLFHQPFPFFNMGGLYQEDDPMAMRRNDLELTFEPVYNCNLGCFAA</sequence>
<dbReference type="EMBL" id="EF185417">
    <property type="protein sequence ID" value="ABM67697.1"/>
    <property type="molecule type" value="mRNA"/>
</dbReference>
<dbReference type="SMR" id="A2IB53"/>
<dbReference type="GO" id="GO:0005634">
    <property type="term" value="C:nucleus"/>
    <property type="evidence" value="ECO:0007669"/>
    <property type="project" value="UniProtKB-SubCell"/>
</dbReference>
<dbReference type="GO" id="GO:0003700">
    <property type="term" value="F:DNA-binding transcription factor activity"/>
    <property type="evidence" value="ECO:0007669"/>
    <property type="project" value="InterPro"/>
</dbReference>
<dbReference type="GO" id="GO:0046983">
    <property type="term" value="F:protein dimerization activity"/>
    <property type="evidence" value="ECO:0007669"/>
    <property type="project" value="InterPro"/>
</dbReference>
<dbReference type="GO" id="GO:0000977">
    <property type="term" value="F:RNA polymerase II transcription regulatory region sequence-specific DNA binding"/>
    <property type="evidence" value="ECO:0007669"/>
    <property type="project" value="InterPro"/>
</dbReference>
<dbReference type="GO" id="GO:0030154">
    <property type="term" value="P:cell differentiation"/>
    <property type="evidence" value="ECO:0007669"/>
    <property type="project" value="UniProtKB-KW"/>
</dbReference>
<dbReference type="GO" id="GO:0009908">
    <property type="term" value="P:flower development"/>
    <property type="evidence" value="ECO:0007669"/>
    <property type="project" value="UniProtKB-KW"/>
</dbReference>
<dbReference type="GO" id="GO:0045944">
    <property type="term" value="P:positive regulation of transcription by RNA polymerase II"/>
    <property type="evidence" value="ECO:0007669"/>
    <property type="project" value="InterPro"/>
</dbReference>
<dbReference type="CDD" id="cd00265">
    <property type="entry name" value="MADS_MEF2_like"/>
    <property type="match status" value="1"/>
</dbReference>
<dbReference type="FunFam" id="3.40.1810.10:FF:000003">
    <property type="entry name" value="MADS-box transcription factor MADS-MC"/>
    <property type="match status" value="1"/>
</dbReference>
<dbReference type="Gene3D" id="3.40.1810.10">
    <property type="entry name" value="Transcription factor, MADS-box"/>
    <property type="match status" value="1"/>
</dbReference>
<dbReference type="InterPro" id="IPR050142">
    <property type="entry name" value="MADS-box/MEF2_TF"/>
</dbReference>
<dbReference type="InterPro" id="IPR033896">
    <property type="entry name" value="MEF2-like_N"/>
</dbReference>
<dbReference type="InterPro" id="IPR002487">
    <property type="entry name" value="TF_Kbox"/>
</dbReference>
<dbReference type="InterPro" id="IPR002100">
    <property type="entry name" value="TF_MADSbox"/>
</dbReference>
<dbReference type="InterPro" id="IPR036879">
    <property type="entry name" value="TF_MADSbox_sf"/>
</dbReference>
<dbReference type="PANTHER" id="PTHR48019">
    <property type="entry name" value="SERUM RESPONSE FACTOR HOMOLOG"/>
    <property type="match status" value="1"/>
</dbReference>
<dbReference type="Pfam" id="PF01486">
    <property type="entry name" value="K-box"/>
    <property type="match status" value="1"/>
</dbReference>
<dbReference type="Pfam" id="PF00319">
    <property type="entry name" value="SRF-TF"/>
    <property type="match status" value="1"/>
</dbReference>
<dbReference type="PRINTS" id="PR00404">
    <property type="entry name" value="MADSDOMAIN"/>
</dbReference>
<dbReference type="SMART" id="SM00432">
    <property type="entry name" value="MADS"/>
    <property type="match status" value="1"/>
</dbReference>
<dbReference type="SUPFAM" id="SSF55455">
    <property type="entry name" value="SRF-like"/>
    <property type="match status" value="1"/>
</dbReference>
<dbReference type="PROSITE" id="PS51297">
    <property type="entry name" value="K_BOX"/>
    <property type="match status" value="1"/>
</dbReference>
<dbReference type="PROSITE" id="PS00350">
    <property type="entry name" value="MADS_BOX_1"/>
    <property type="match status" value="1"/>
</dbReference>
<dbReference type="PROSITE" id="PS50066">
    <property type="entry name" value="MADS_BOX_2"/>
    <property type="match status" value="1"/>
</dbReference>
<proteinExistence type="evidence at transcript level"/>
<gene>
    <name type="primary">AP1</name>
</gene>
<feature type="chain" id="PRO_0000417138" description="Floral homeotic protein APETALA 1">
    <location>
        <begin position="1"/>
        <end position="256"/>
    </location>
</feature>
<feature type="domain" description="MADS-box" evidence="2">
    <location>
        <begin position="1"/>
        <end position="61"/>
    </location>
</feature>
<feature type="domain" description="K-box" evidence="3">
    <location>
        <begin position="88"/>
        <end position="178"/>
    </location>
</feature>
<organism>
    <name type="scientific">Citrus sinensis</name>
    <name type="common">Sweet orange</name>
    <name type="synonym">Citrus aurantium var. sinensis</name>
    <dbReference type="NCBI Taxonomy" id="2711"/>
    <lineage>
        <taxon>Eukaryota</taxon>
        <taxon>Viridiplantae</taxon>
        <taxon>Streptophyta</taxon>
        <taxon>Embryophyta</taxon>
        <taxon>Tracheophyta</taxon>
        <taxon>Spermatophyta</taxon>
        <taxon>Magnoliopsida</taxon>
        <taxon>eudicotyledons</taxon>
        <taxon>Gunneridae</taxon>
        <taxon>Pentapetalae</taxon>
        <taxon>rosids</taxon>
        <taxon>malvids</taxon>
        <taxon>Sapindales</taxon>
        <taxon>Rutaceae</taxon>
        <taxon>Aurantioideae</taxon>
        <taxon>Citrus</taxon>
    </lineage>
</organism>
<keyword id="KW-0010">Activator</keyword>
<keyword id="KW-0175">Coiled coil</keyword>
<keyword id="KW-0217">Developmental protein</keyword>
<keyword id="KW-0221">Differentiation</keyword>
<keyword id="KW-0238">DNA-binding</keyword>
<keyword id="KW-0287">Flowering</keyword>
<keyword id="KW-0539">Nucleus</keyword>
<keyword id="KW-0804">Transcription</keyword>
<keyword id="KW-0805">Transcription regulation</keyword>
<comment type="function">
    <text evidence="1">Transcription factor that promotes early floral meristem identity in synergy with LEAFY. Displays a redundant function with CAULIFLOWER in the up-regulation of LEAFY. Required subsequently for the transition of an inflorescence meristem into a floral meristem, and for the normal development of sepals and petals in flowers. Regulates positively B class homeotic proteins (By similarity).</text>
</comment>
<comment type="subunit">
    <text evidence="1">Homodimer capable of binding to CArG-box sequences.</text>
</comment>
<comment type="subcellular location">
    <subcellularLocation>
        <location evidence="2">Nucleus</location>
    </subcellularLocation>
</comment>
<protein>
    <recommendedName>
        <fullName>Floral homeotic protein APETALA 1</fullName>
    </recommendedName>
    <alternativeName>
        <fullName>Agamous-like MADS-box protein AP1</fullName>
        <shortName>CitMAD AP1</shortName>
    </alternativeName>
</protein>
<evidence type="ECO:0000250" key="1"/>
<evidence type="ECO:0000255" key="2">
    <source>
        <dbReference type="PROSITE-ProRule" id="PRU00251"/>
    </source>
</evidence>
<evidence type="ECO:0000255" key="3">
    <source>
        <dbReference type="PROSITE-ProRule" id="PRU00629"/>
    </source>
</evidence>
<name>AP1_CITSI</name>